<evidence type="ECO:0000255" key="1">
    <source>
        <dbReference type="HAMAP-Rule" id="MF_01574"/>
    </source>
</evidence>
<feature type="chain" id="PRO_0000063889" description="6-phospho-beta-galactosidase">
    <location>
        <begin position="1"/>
        <end position="470"/>
    </location>
</feature>
<feature type="active site" description="Proton donor" evidence="1">
    <location>
        <position position="160"/>
    </location>
</feature>
<feature type="active site" description="Nucleophile" evidence="1">
    <location>
        <position position="375"/>
    </location>
</feature>
<feature type="binding site" evidence="1">
    <location>
        <position position="19"/>
    </location>
    <ligand>
        <name>D-galactose 6-phosphate</name>
        <dbReference type="ChEBI" id="CHEBI:91004"/>
    </ligand>
</feature>
<feature type="binding site" evidence="1">
    <location>
        <position position="116"/>
    </location>
    <ligand>
        <name>D-galactose 6-phosphate</name>
        <dbReference type="ChEBI" id="CHEBI:91004"/>
    </ligand>
</feature>
<feature type="binding site" evidence="1">
    <location>
        <position position="159"/>
    </location>
    <ligand>
        <name>D-galactose 6-phosphate</name>
        <dbReference type="ChEBI" id="CHEBI:91004"/>
    </ligand>
</feature>
<feature type="binding site" evidence="1">
    <location>
        <position position="160"/>
    </location>
    <ligand>
        <name>D-galactose 6-phosphate</name>
        <dbReference type="ChEBI" id="CHEBI:91004"/>
    </ligand>
</feature>
<feature type="binding site" evidence="1">
    <location>
        <position position="297"/>
    </location>
    <ligand>
        <name>D-galactose 6-phosphate</name>
        <dbReference type="ChEBI" id="CHEBI:91004"/>
    </ligand>
</feature>
<feature type="binding site" evidence="1">
    <location>
        <position position="430"/>
    </location>
    <ligand>
        <name>D-galactose 6-phosphate</name>
        <dbReference type="ChEBI" id="CHEBI:91004"/>
    </ligand>
</feature>
<feature type="binding site" evidence="1">
    <location>
        <position position="431"/>
    </location>
    <ligand>
        <name>D-galactose 6-phosphate</name>
        <dbReference type="ChEBI" id="CHEBI:91004"/>
    </ligand>
</feature>
<feature type="binding site" evidence="1">
    <location>
        <position position="437"/>
    </location>
    <ligand>
        <name>D-galactose 6-phosphate</name>
        <dbReference type="ChEBI" id="CHEBI:91004"/>
    </ligand>
</feature>
<feature type="binding site" evidence="1">
    <location>
        <position position="439"/>
    </location>
    <ligand>
        <name>D-galactose 6-phosphate</name>
        <dbReference type="ChEBI" id="CHEBI:91004"/>
    </ligand>
</feature>
<name>LACG_STAAW</name>
<protein>
    <recommendedName>
        <fullName evidence="1">6-phospho-beta-galactosidase</fullName>
        <ecNumber evidence="1">3.2.1.85</ecNumber>
    </recommendedName>
    <alternativeName>
        <fullName evidence="1">Beta-D-phosphogalactoside galactohydrolase</fullName>
        <shortName evidence="1">PGALase</shortName>
    </alternativeName>
    <alternativeName>
        <fullName evidence="1">P-beta-Gal</fullName>
        <shortName evidence="1">PBG</shortName>
    </alternativeName>
</protein>
<sequence>MTKTLPEDFIFGGATAAYQAEGATNTDGKGRVAWDTYLEENYWYTAEPASDFYNRYPVDLELSEKFGVNGIRISIAWSRIFPNGYGEVNPKGVEYYHKLFAECHKRHVEPFVTLHHFDTPEVLHKDGDFLNRKTIDYFVDYAEYCFKEFPEVKYWTTFNEIGPIGDGQYLVGKFPPGIKYDFEKVFQSHHNMMVAHARAVKLFKDGGYQGEIGVVHALPTKYPFDPSNPEDVRAAELEDIIHNKFILDATYLGKYSRETMEGVQHILSVNGGKLNITDEDYAILDAAKDLNDFLGINYYMSDWMRGYDGESEITHNATGDKGGSKYQLKGVGQREFDVDVPRTDWDWMIYPQGLYDQIMRVVKDYPNYHKIYITENGLGYKDEFIESEKTVHDDARIDYVRQHLNVIADAIKDGANVKGYFIWSLMDVFSWSNGYEKRYGLFYVDFETQERYPKKSAYWYKELAETKEIK</sequence>
<gene>
    <name evidence="1" type="primary">lacG</name>
    <name type="ordered locus">MW2115</name>
</gene>
<dbReference type="EC" id="3.2.1.85" evidence="1"/>
<dbReference type="EMBL" id="BA000033">
    <property type="protein sequence ID" value="BAB95980.1"/>
    <property type="molecule type" value="Genomic_DNA"/>
</dbReference>
<dbReference type="RefSeq" id="WP_000169224.1">
    <property type="nucleotide sequence ID" value="NC_003923.1"/>
</dbReference>
<dbReference type="SMR" id="P67769"/>
<dbReference type="CAZy" id="GH1">
    <property type="family name" value="Glycoside Hydrolase Family 1"/>
</dbReference>
<dbReference type="KEGG" id="sam:MW2115"/>
<dbReference type="HOGENOM" id="CLU_001859_1_3_9"/>
<dbReference type="UniPathway" id="UPA00542">
    <property type="reaction ID" value="UER00605"/>
</dbReference>
<dbReference type="GO" id="GO:0005829">
    <property type="term" value="C:cytosol"/>
    <property type="evidence" value="ECO:0007669"/>
    <property type="project" value="TreeGrafter"/>
</dbReference>
<dbReference type="GO" id="GO:0033920">
    <property type="term" value="F:6-phospho-beta-galactosidase activity"/>
    <property type="evidence" value="ECO:0007669"/>
    <property type="project" value="UniProtKB-UniRule"/>
</dbReference>
<dbReference type="GO" id="GO:0008422">
    <property type="term" value="F:beta-glucosidase activity"/>
    <property type="evidence" value="ECO:0007669"/>
    <property type="project" value="TreeGrafter"/>
</dbReference>
<dbReference type="GO" id="GO:0019512">
    <property type="term" value="P:lactose catabolic process via tagatose-6-phosphate"/>
    <property type="evidence" value="ECO:0007669"/>
    <property type="project" value="InterPro"/>
</dbReference>
<dbReference type="FunFam" id="3.20.20.80:FF:000004">
    <property type="entry name" value="Beta-glucosidase 6-phospho-beta-glucosidase"/>
    <property type="match status" value="1"/>
</dbReference>
<dbReference type="Gene3D" id="3.20.20.80">
    <property type="entry name" value="Glycosidases"/>
    <property type="match status" value="1"/>
</dbReference>
<dbReference type="HAMAP" id="MF_01574">
    <property type="entry name" value="LacG"/>
    <property type="match status" value="1"/>
</dbReference>
<dbReference type="InterPro" id="IPR005928">
    <property type="entry name" value="6P-beta-galactosidase"/>
</dbReference>
<dbReference type="InterPro" id="IPR001360">
    <property type="entry name" value="Glyco_hydro_1"/>
</dbReference>
<dbReference type="InterPro" id="IPR018120">
    <property type="entry name" value="Glyco_hydro_1_AS"/>
</dbReference>
<dbReference type="InterPro" id="IPR033132">
    <property type="entry name" value="Glyco_hydro_1_N_CS"/>
</dbReference>
<dbReference type="InterPro" id="IPR017853">
    <property type="entry name" value="Glycoside_hydrolase_SF"/>
</dbReference>
<dbReference type="NCBIfam" id="TIGR01233">
    <property type="entry name" value="lacG"/>
    <property type="match status" value="1"/>
</dbReference>
<dbReference type="NCBIfam" id="NF010036">
    <property type="entry name" value="PRK13511.1"/>
    <property type="match status" value="1"/>
</dbReference>
<dbReference type="PANTHER" id="PTHR10353">
    <property type="entry name" value="GLYCOSYL HYDROLASE"/>
    <property type="match status" value="1"/>
</dbReference>
<dbReference type="PANTHER" id="PTHR10353:SF36">
    <property type="entry name" value="LP05116P"/>
    <property type="match status" value="1"/>
</dbReference>
<dbReference type="Pfam" id="PF00232">
    <property type="entry name" value="Glyco_hydro_1"/>
    <property type="match status" value="1"/>
</dbReference>
<dbReference type="PRINTS" id="PR00131">
    <property type="entry name" value="GLHYDRLASE1"/>
</dbReference>
<dbReference type="SUPFAM" id="SSF51445">
    <property type="entry name" value="(Trans)glycosidases"/>
    <property type="match status" value="1"/>
</dbReference>
<dbReference type="PROSITE" id="PS00572">
    <property type="entry name" value="GLYCOSYL_HYDROL_F1_1"/>
    <property type="match status" value="1"/>
</dbReference>
<dbReference type="PROSITE" id="PS00653">
    <property type="entry name" value="GLYCOSYL_HYDROL_F1_2"/>
    <property type="match status" value="1"/>
</dbReference>
<organism>
    <name type="scientific">Staphylococcus aureus (strain MW2)</name>
    <dbReference type="NCBI Taxonomy" id="196620"/>
    <lineage>
        <taxon>Bacteria</taxon>
        <taxon>Bacillati</taxon>
        <taxon>Bacillota</taxon>
        <taxon>Bacilli</taxon>
        <taxon>Bacillales</taxon>
        <taxon>Staphylococcaceae</taxon>
        <taxon>Staphylococcus</taxon>
    </lineage>
</organism>
<reference key="1">
    <citation type="journal article" date="2002" name="Lancet">
        <title>Genome and virulence determinants of high virulence community-acquired MRSA.</title>
        <authorList>
            <person name="Baba T."/>
            <person name="Takeuchi F."/>
            <person name="Kuroda M."/>
            <person name="Yuzawa H."/>
            <person name="Aoki K."/>
            <person name="Oguchi A."/>
            <person name="Nagai Y."/>
            <person name="Iwama N."/>
            <person name="Asano K."/>
            <person name="Naimi T."/>
            <person name="Kuroda H."/>
            <person name="Cui L."/>
            <person name="Yamamoto K."/>
            <person name="Hiramatsu K."/>
        </authorList>
    </citation>
    <scope>NUCLEOTIDE SEQUENCE [LARGE SCALE GENOMIC DNA]</scope>
    <source>
        <strain>MW2</strain>
    </source>
</reference>
<comment type="catalytic activity">
    <reaction evidence="1">
        <text>a 6-phospho-beta-D-galactoside + H2O = D-galactose 6-phosphate + an alcohol</text>
        <dbReference type="Rhea" id="RHEA:24568"/>
        <dbReference type="ChEBI" id="CHEBI:15377"/>
        <dbReference type="ChEBI" id="CHEBI:30879"/>
        <dbReference type="ChEBI" id="CHEBI:58534"/>
        <dbReference type="ChEBI" id="CHEBI:91004"/>
        <dbReference type="EC" id="3.2.1.85"/>
    </reaction>
</comment>
<comment type="pathway">
    <text evidence="1">Carbohydrate metabolism; lactose degradation; D-galactose 6-phosphate and beta-D-glucose from lactose 6-phosphate: step 1/1.</text>
</comment>
<comment type="similarity">
    <text evidence="1">Belongs to the glycosyl hydrolase 1 family.</text>
</comment>
<proteinExistence type="inferred from homology"/>
<accession>P67769</accession>
<accession>Q99S78</accession>
<keyword id="KW-0326">Glycosidase</keyword>
<keyword id="KW-0378">Hydrolase</keyword>